<organism>
    <name type="scientific">Vibrio parahaemolyticus serotype O3:K6 (strain RIMD 2210633)</name>
    <dbReference type="NCBI Taxonomy" id="223926"/>
    <lineage>
        <taxon>Bacteria</taxon>
        <taxon>Pseudomonadati</taxon>
        <taxon>Pseudomonadota</taxon>
        <taxon>Gammaproteobacteria</taxon>
        <taxon>Vibrionales</taxon>
        <taxon>Vibrionaceae</taxon>
        <taxon>Vibrio</taxon>
    </lineage>
</organism>
<comment type="function">
    <text evidence="1">Molecular chaperone. Has ATPase activity.</text>
</comment>
<comment type="subunit">
    <text evidence="1">Homodimer.</text>
</comment>
<comment type="subcellular location">
    <subcellularLocation>
        <location evidence="1">Cytoplasm</location>
    </subcellularLocation>
</comment>
<comment type="similarity">
    <text evidence="1">Belongs to the heat shock protein 90 family.</text>
</comment>
<evidence type="ECO:0000255" key="1">
    <source>
        <dbReference type="HAMAP-Rule" id="MF_00505"/>
    </source>
</evidence>
<dbReference type="EMBL" id="BA000031">
    <property type="protein sequence ID" value="BAC59084.1"/>
    <property type="molecule type" value="Genomic_DNA"/>
</dbReference>
<dbReference type="RefSeq" id="NP_797200.1">
    <property type="nucleotide sequence ID" value="NC_004603.1"/>
</dbReference>
<dbReference type="RefSeq" id="WP_005478520.1">
    <property type="nucleotide sequence ID" value="NC_004603.1"/>
</dbReference>
<dbReference type="SMR" id="Q87RH5"/>
<dbReference type="GeneID" id="1188318"/>
<dbReference type="KEGG" id="vpa:VP0821"/>
<dbReference type="PATRIC" id="fig|223926.6.peg.778"/>
<dbReference type="eggNOG" id="COG0326">
    <property type="taxonomic scope" value="Bacteria"/>
</dbReference>
<dbReference type="HOGENOM" id="CLU_006684_3_0_6"/>
<dbReference type="Proteomes" id="UP000002493">
    <property type="component" value="Chromosome 1"/>
</dbReference>
<dbReference type="GO" id="GO:0005737">
    <property type="term" value="C:cytoplasm"/>
    <property type="evidence" value="ECO:0007669"/>
    <property type="project" value="UniProtKB-SubCell"/>
</dbReference>
<dbReference type="GO" id="GO:0005524">
    <property type="term" value="F:ATP binding"/>
    <property type="evidence" value="ECO:0007669"/>
    <property type="project" value="UniProtKB-UniRule"/>
</dbReference>
<dbReference type="GO" id="GO:0016887">
    <property type="term" value="F:ATP hydrolysis activity"/>
    <property type="evidence" value="ECO:0007669"/>
    <property type="project" value="InterPro"/>
</dbReference>
<dbReference type="GO" id="GO:0140662">
    <property type="term" value="F:ATP-dependent protein folding chaperone"/>
    <property type="evidence" value="ECO:0007669"/>
    <property type="project" value="InterPro"/>
</dbReference>
<dbReference type="GO" id="GO:0051082">
    <property type="term" value="F:unfolded protein binding"/>
    <property type="evidence" value="ECO:0007669"/>
    <property type="project" value="UniProtKB-UniRule"/>
</dbReference>
<dbReference type="CDD" id="cd16927">
    <property type="entry name" value="HATPase_Hsp90-like"/>
    <property type="match status" value="1"/>
</dbReference>
<dbReference type="FunFam" id="1.20.120.790:FF:000002">
    <property type="entry name" value="Molecular chaperone HtpG"/>
    <property type="match status" value="1"/>
</dbReference>
<dbReference type="FunFam" id="3.30.230.80:FF:000002">
    <property type="entry name" value="Molecular chaperone HtpG"/>
    <property type="match status" value="1"/>
</dbReference>
<dbReference type="FunFam" id="3.30.565.10:FF:000009">
    <property type="entry name" value="Molecular chaperone HtpG"/>
    <property type="match status" value="1"/>
</dbReference>
<dbReference type="FunFam" id="3.40.50.11260:FF:000002">
    <property type="entry name" value="Molecular chaperone HtpG"/>
    <property type="match status" value="1"/>
</dbReference>
<dbReference type="Gene3D" id="3.30.230.80">
    <property type="match status" value="1"/>
</dbReference>
<dbReference type="Gene3D" id="3.40.50.11260">
    <property type="match status" value="1"/>
</dbReference>
<dbReference type="Gene3D" id="1.20.120.790">
    <property type="entry name" value="Heat shock protein 90, C-terminal domain"/>
    <property type="match status" value="1"/>
</dbReference>
<dbReference type="Gene3D" id="3.30.565.10">
    <property type="entry name" value="Histidine kinase-like ATPase, C-terminal domain"/>
    <property type="match status" value="1"/>
</dbReference>
<dbReference type="HAMAP" id="MF_00505">
    <property type="entry name" value="HSP90"/>
    <property type="match status" value="1"/>
</dbReference>
<dbReference type="InterPro" id="IPR036890">
    <property type="entry name" value="HATPase_C_sf"/>
</dbReference>
<dbReference type="InterPro" id="IPR019805">
    <property type="entry name" value="Heat_shock_protein_90_CS"/>
</dbReference>
<dbReference type="InterPro" id="IPR037196">
    <property type="entry name" value="HSP90_C"/>
</dbReference>
<dbReference type="InterPro" id="IPR001404">
    <property type="entry name" value="Hsp90_fam"/>
</dbReference>
<dbReference type="InterPro" id="IPR020575">
    <property type="entry name" value="Hsp90_N"/>
</dbReference>
<dbReference type="InterPro" id="IPR020568">
    <property type="entry name" value="Ribosomal_Su5_D2-typ_SF"/>
</dbReference>
<dbReference type="NCBIfam" id="NF003555">
    <property type="entry name" value="PRK05218.1"/>
    <property type="match status" value="1"/>
</dbReference>
<dbReference type="PANTHER" id="PTHR11528">
    <property type="entry name" value="HEAT SHOCK PROTEIN 90 FAMILY MEMBER"/>
    <property type="match status" value="1"/>
</dbReference>
<dbReference type="Pfam" id="PF13589">
    <property type="entry name" value="HATPase_c_3"/>
    <property type="match status" value="1"/>
</dbReference>
<dbReference type="Pfam" id="PF00183">
    <property type="entry name" value="HSP90"/>
    <property type="match status" value="1"/>
</dbReference>
<dbReference type="PIRSF" id="PIRSF002583">
    <property type="entry name" value="Hsp90"/>
    <property type="match status" value="1"/>
</dbReference>
<dbReference type="PRINTS" id="PR00775">
    <property type="entry name" value="HEATSHOCK90"/>
</dbReference>
<dbReference type="SMART" id="SM00387">
    <property type="entry name" value="HATPase_c"/>
    <property type="match status" value="1"/>
</dbReference>
<dbReference type="SUPFAM" id="SSF55874">
    <property type="entry name" value="ATPase domain of HSP90 chaperone/DNA topoisomerase II/histidine kinase"/>
    <property type="match status" value="1"/>
</dbReference>
<dbReference type="SUPFAM" id="SSF110942">
    <property type="entry name" value="HSP90 C-terminal domain"/>
    <property type="match status" value="1"/>
</dbReference>
<dbReference type="SUPFAM" id="SSF54211">
    <property type="entry name" value="Ribosomal protein S5 domain 2-like"/>
    <property type="match status" value="1"/>
</dbReference>
<dbReference type="PROSITE" id="PS00298">
    <property type="entry name" value="HSP90"/>
    <property type="match status" value="1"/>
</dbReference>
<reference key="1">
    <citation type="journal article" date="2003" name="Lancet">
        <title>Genome sequence of Vibrio parahaemolyticus: a pathogenic mechanism distinct from that of V. cholerae.</title>
        <authorList>
            <person name="Makino K."/>
            <person name="Oshima K."/>
            <person name="Kurokawa K."/>
            <person name="Yokoyama K."/>
            <person name="Uda T."/>
            <person name="Tagomori K."/>
            <person name="Iijima Y."/>
            <person name="Najima M."/>
            <person name="Nakano M."/>
            <person name="Yamashita A."/>
            <person name="Kubota Y."/>
            <person name="Kimura S."/>
            <person name="Yasunaga T."/>
            <person name="Honda T."/>
            <person name="Shinagawa H."/>
            <person name="Hattori M."/>
            <person name="Iida T."/>
        </authorList>
    </citation>
    <scope>NUCLEOTIDE SEQUENCE [LARGE SCALE GENOMIC DNA]</scope>
    <source>
        <strain>RIMD 2210633</strain>
    </source>
</reference>
<proteinExistence type="inferred from homology"/>
<name>HTPG_VIBPA</name>
<feature type="chain" id="PRO_0000063021" description="Chaperone protein HtpG">
    <location>
        <begin position="1"/>
        <end position="634"/>
    </location>
</feature>
<feature type="region of interest" description="A; substrate-binding" evidence="1">
    <location>
        <begin position="1"/>
        <end position="344"/>
    </location>
</feature>
<feature type="region of interest" description="B" evidence="1">
    <location>
        <begin position="345"/>
        <end position="561"/>
    </location>
</feature>
<feature type="region of interest" description="C" evidence="1">
    <location>
        <begin position="562"/>
        <end position="634"/>
    </location>
</feature>
<protein>
    <recommendedName>
        <fullName evidence="1">Chaperone protein HtpG</fullName>
    </recommendedName>
    <alternativeName>
        <fullName evidence="1">Heat shock protein HtpG</fullName>
    </alternativeName>
    <alternativeName>
        <fullName evidence="1">High temperature protein G</fullName>
    </alternativeName>
</protein>
<gene>
    <name evidence="1" type="primary">htpG</name>
    <name type="ordered locus">VP0821</name>
</gene>
<accession>Q87RH5</accession>
<sequence>MSETVSQNKETRGFQSEVKQLLHLMIHSLYSNKEIFLRELISNASDASDKLRFQALSNPDLYEGNADLGVKLSFDESANTLTISDNGIGMSRNDVIEHLGTIAKSGTAEFFSKLSEEQSKDSQLIGQFGVGFYSAFIVADAVTVRTRAAGLPADEAVQWHSAGEGEYTIENITKESRGTDIILHMRDEGKEFLNEWRLRDVISKYSDHIGIPVSIQTVVRDEDGKETDEKKWEQINKAQALWTRNKADISDEEYQEFYKHVSHDFADPLVWSHNRVEGKNDYTSLLYIPSKAPWDMMNRDHKSGLKLYVQRVFIMDDAEQFMPSYLRFVRGLIDSNDLPLNVSREILQDNKVTQSLRNACTKRVLTMLERMAKNDEEKYQSFWKEFGLVLKEGPAEDFANKEKIAGLLRFASTEVDSAEQTVGLASYVERMKEGQDKIYYLTADSYAAAKNSPHLEQFKAKGIEVILMFDRIDEWLMNYLTEFDGKQFQSITKAGLDLSKFEDEADKEKQKETEEEFKSVVERTKSYLGDRVKDVRTTFKLASTPAVVVTDDYEMGTQMAKLLAAAGQAVPEVKYIFEINPEHELVKRMADEADEEAFGRWVEVLLGQAMLAERGSMEDPTQFLGAINKLLTKV</sequence>
<keyword id="KW-0067">ATP-binding</keyword>
<keyword id="KW-0143">Chaperone</keyword>
<keyword id="KW-0963">Cytoplasm</keyword>
<keyword id="KW-0547">Nucleotide-binding</keyword>
<keyword id="KW-0346">Stress response</keyword>